<accession>A9GWW0</accession>
<organism>
    <name type="scientific">Sorangium cellulosum (strain So ce56)</name>
    <name type="common">Polyangium cellulosum (strain So ce56)</name>
    <dbReference type="NCBI Taxonomy" id="448385"/>
    <lineage>
        <taxon>Bacteria</taxon>
        <taxon>Pseudomonadati</taxon>
        <taxon>Myxococcota</taxon>
        <taxon>Polyangia</taxon>
        <taxon>Polyangiales</taxon>
        <taxon>Polyangiaceae</taxon>
        <taxon>Sorangium</taxon>
    </lineage>
</organism>
<comment type="function">
    <text evidence="1">Catalyzes the condensation of carbamoyl phosphate and aspartate to form carbamoyl aspartate and inorganic phosphate, the committed step in the de novo pyrimidine nucleotide biosynthesis pathway.</text>
</comment>
<comment type="catalytic activity">
    <reaction evidence="1">
        <text>carbamoyl phosphate + L-aspartate = N-carbamoyl-L-aspartate + phosphate + H(+)</text>
        <dbReference type="Rhea" id="RHEA:20013"/>
        <dbReference type="ChEBI" id="CHEBI:15378"/>
        <dbReference type="ChEBI" id="CHEBI:29991"/>
        <dbReference type="ChEBI" id="CHEBI:32814"/>
        <dbReference type="ChEBI" id="CHEBI:43474"/>
        <dbReference type="ChEBI" id="CHEBI:58228"/>
        <dbReference type="EC" id="2.1.3.2"/>
    </reaction>
</comment>
<comment type="pathway">
    <text evidence="1">Pyrimidine metabolism; UMP biosynthesis via de novo pathway; (S)-dihydroorotate from bicarbonate: step 2/3.</text>
</comment>
<comment type="subunit">
    <text evidence="1">Heterododecamer (2C3:3R2) of six catalytic PyrB chains organized as two trimers (C3), and six regulatory PyrI chains organized as three dimers (R2).</text>
</comment>
<comment type="similarity">
    <text evidence="1">Belongs to the aspartate/ornithine carbamoyltransferase superfamily. ATCase family.</text>
</comment>
<name>PYRB_SORC5</name>
<keyword id="KW-0665">Pyrimidine biosynthesis</keyword>
<keyword id="KW-1185">Reference proteome</keyword>
<keyword id="KW-0808">Transferase</keyword>
<reference key="1">
    <citation type="journal article" date="2007" name="Nat. Biotechnol.">
        <title>Complete genome sequence of the myxobacterium Sorangium cellulosum.</title>
        <authorList>
            <person name="Schneiker S."/>
            <person name="Perlova O."/>
            <person name="Kaiser O."/>
            <person name="Gerth K."/>
            <person name="Alici A."/>
            <person name="Altmeyer M.O."/>
            <person name="Bartels D."/>
            <person name="Bekel T."/>
            <person name="Beyer S."/>
            <person name="Bode E."/>
            <person name="Bode H.B."/>
            <person name="Bolten C.J."/>
            <person name="Choudhuri J.V."/>
            <person name="Doss S."/>
            <person name="Elnakady Y.A."/>
            <person name="Frank B."/>
            <person name="Gaigalat L."/>
            <person name="Goesmann A."/>
            <person name="Groeger C."/>
            <person name="Gross F."/>
            <person name="Jelsbak L."/>
            <person name="Jelsbak L."/>
            <person name="Kalinowski J."/>
            <person name="Kegler C."/>
            <person name="Knauber T."/>
            <person name="Konietzny S."/>
            <person name="Kopp M."/>
            <person name="Krause L."/>
            <person name="Krug D."/>
            <person name="Linke B."/>
            <person name="Mahmud T."/>
            <person name="Martinez-Arias R."/>
            <person name="McHardy A.C."/>
            <person name="Merai M."/>
            <person name="Meyer F."/>
            <person name="Mormann S."/>
            <person name="Munoz-Dorado J."/>
            <person name="Perez J."/>
            <person name="Pradella S."/>
            <person name="Rachid S."/>
            <person name="Raddatz G."/>
            <person name="Rosenau F."/>
            <person name="Rueckert C."/>
            <person name="Sasse F."/>
            <person name="Scharfe M."/>
            <person name="Schuster S.C."/>
            <person name="Suen G."/>
            <person name="Treuner-Lange A."/>
            <person name="Velicer G.J."/>
            <person name="Vorholter F.-J."/>
            <person name="Weissman K.J."/>
            <person name="Welch R.D."/>
            <person name="Wenzel S.C."/>
            <person name="Whitworth D.E."/>
            <person name="Wilhelm S."/>
            <person name="Wittmann C."/>
            <person name="Bloecker H."/>
            <person name="Puehler A."/>
            <person name="Mueller R."/>
        </authorList>
    </citation>
    <scope>NUCLEOTIDE SEQUENCE [LARGE SCALE GENOMIC DNA]</scope>
    <source>
        <strain>So ce56</strain>
    </source>
</reference>
<feature type="chain" id="PRO_0000329118" description="Aspartate carbamoyltransferase catalytic subunit">
    <location>
        <begin position="1"/>
        <end position="321"/>
    </location>
</feature>
<feature type="binding site" evidence="1">
    <location>
        <position position="60"/>
    </location>
    <ligand>
        <name>carbamoyl phosphate</name>
        <dbReference type="ChEBI" id="CHEBI:58228"/>
    </ligand>
</feature>
<feature type="binding site" evidence="1">
    <location>
        <position position="61"/>
    </location>
    <ligand>
        <name>carbamoyl phosphate</name>
        <dbReference type="ChEBI" id="CHEBI:58228"/>
    </ligand>
</feature>
<feature type="binding site" evidence="1">
    <location>
        <position position="88"/>
    </location>
    <ligand>
        <name>L-aspartate</name>
        <dbReference type="ChEBI" id="CHEBI:29991"/>
    </ligand>
</feature>
<feature type="binding site" evidence="1">
    <location>
        <position position="110"/>
    </location>
    <ligand>
        <name>carbamoyl phosphate</name>
        <dbReference type="ChEBI" id="CHEBI:58228"/>
    </ligand>
</feature>
<feature type="binding site" evidence="1">
    <location>
        <position position="138"/>
    </location>
    <ligand>
        <name>carbamoyl phosphate</name>
        <dbReference type="ChEBI" id="CHEBI:58228"/>
    </ligand>
</feature>
<feature type="binding site" evidence="1">
    <location>
        <position position="141"/>
    </location>
    <ligand>
        <name>carbamoyl phosphate</name>
        <dbReference type="ChEBI" id="CHEBI:58228"/>
    </ligand>
</feature>
<feature type="binding site" evidence="1">
    <location>
        <position position="171"/>
    </location>
    <ligand>
        <name>L-aspartate</name>
        <dbReference type="ChEBI" id="CHEBI:29991"/>
    </ligand>
</feature>
<feature type="binding site" evidence="1">
    <location>
        <position position="225"/>
    </location>
    <ligand>
        <name>L-aspartate</name>
        <dbReference type="ChEBI" id="CHEBI:29991"/>
    </ligand>
</feature>
<feature type="binding site" evidence="1">
    <location>
        <position position="266"/>
    </location>
    <ligand>
        <name>carbamoyl phosphate</name>
        <dbReference type="ChEBI" id="CHEBI:58228"/>
    </ligand>
</feature>
<feature type="binding site" evidence="1">
    <location>
        <position position="267"/>
    </location>
    <ligand>
        <name>carbamoyl phosphate</name>
        <dbReference type="ChEBI" id="CHEBI:58228"/>
    </ligand>
</feature>
<proteinExistence type="inferred from homology"/>
<protein>
    <recommendedName>
        <fullName evidence="1">Aspartate carbamoyltransferase catalytic subunit</fullName>
        <ecNumber evidence="1">2.1.3.2</ecNumber>
    </recommendedName>
    <alternativeName>
        <fullName evidence="1">Aspartate transcarbamylase</fullName>
        <shortName evidence="1">ATCase</shortName>
    </alternativeName>
</protein>
<sequence>MRRIYPHRHLLGIEGLSRPEIVALLDAAESLFDVSRRSVRKVPTLRGKTVVNLFYEPSTRTRTSFELAGKRLSADVINISVSTSSAVKGESLLDTVQNLQAMQPDVLVIRHAASGAPHHVAAHTRAAVVNAGDGTHEHPTQALLDAFTIRRAKGRLEGLEVAICGDIVHSRVARSNAHLLTTMGARVRFAGPRTLLPIAGESLGATVYDRIEPALEGADVVMMLRVQRERLSGSFLPSTREYSRTFGLNPARLALAKPDAIVMHPGPMNRGVEIDPRVADGAQSVILDQVEAGVAVRMAVLWILAAEANEFSATGEPRPAP</sequence>
<evidence type="ECO:0000255" key="1">
    <source>
        <dbReference type="HAMAP-Rule" id="MF_00001"/>
    </source>
</evidence>
<dbReference type="EC" id="2.1.3.2" evidence="1"/>
<dbReference type="EMBL" id="AM746676">
    <property type="protein sequence ID" value="CAN93982.1"/>
    <property type="molecule type" value="Genomic_DNA"/>
</dbReference>
<dbReference type="RefSeq" id="WP_012236452.1">
    <property type="nucleotide sequence ID" value="NC_010162.1"/>
</dbReference>
<dbReference type="SMR" id="A9GWW0"/>
<dbReference type="STRING" id="448385.sce3822"/>
<dbReference type="KEGG" id="scl:sce3822"/>
<dbReference type="eggNOG" id="COG0540">
    <property type="taxonomic scope" value="Bacteria"/>
</dbReference>
<dbReference type="HOGENOM" id="CLU_043846_2_0_7"/>
<dbReference type="OrthoDB" id="9774690at2"/>
<dbReference type="BioCyc" id="SCEL448385:SCE_RS19595-MONOMER"/>
<dbReference type="UniPathway" id="UPA00070">
    <property type="reaction ID" value="UER00116"/>
</dbReference>
<dbReference type="Proteomes" id="UP000002139">
    <property type="component" value="Chromosome"/>
</dbReference>
<dbReference type="GO" id="GO:0005829">
    <property type="term" value="C:cytosol"/>
    <property type="evidence" value="ECO:0007669"/>
    <property type="project" value="TreeGrafter"/>
</dbReference>
<dbReference type="GO" id="GO:0016597">
    <property type="term" value="F:amino acid binding"/>
    <property type="evidence" value="ECO:0007669"/>
    <property type="project" value="InterPro"/>
</dbReference>
<dbReference type="GO" id="GO:0004070">
    <property type="term" value="F:aspartate carbamoyltransferase activity"/>
    <property type="evidence" value="ECO:0007669"/>
    <property type="project" value="UniProtKB-UniRule"/>
</dbReference>
<dbReference type="GO" id="GO:0006207">
    <property type="term" value="P:'de novo' pyrimidine nucleobase biosynthetic process"/>
    <property type="evidence" value="ECO:0007669"/>
    <property type="project" value="InterPro"/>
</dbReference>
<dbReference type="GO" id="GO:0044205">
    <property type="term" value="P:'de novo' UMP biosynthetic process"/>
    <property type="evidence" value="ECO:0007669"/>
    <property type="project" value="UniProtKB-UniRule"/>
</dbReference>
<dbReference type="GO" id="GO:0006520">
    <property type="term" value="P:amino acid metabolic process"/>
    <property type="evidence" value="ECO:0007669"/>
    <property type="project" value="InterPro"/>
</dbReference>
<dbReference type="FunFam" id="3.40.50.1370:FF:000007">
    <property type="entry name" value="Aspartate carbamoyltransferase"/>
    <property type="match status" value="1"/>
</dbReference>
<dbReference type="Gene3D" id="3.40.50.1370">
    <property type="entry name" value="Aspartate/ornithine carbamoyltransferase"/>
    <property type="match status" value="2"/>
</dbReference>
<dbReference type="HAMAP" id="MF_00001">
    <property type="entry name" value="Asp_carb_tr"/>
    <property type="match status" value="1"/>
</dbReference>
<dbReference type="InterPro" id="IPR006132">
    <property type="entry name" value="Asp/Orn_carbamoyltranf_P-bd"/>
</dbReference>
<dbReference type="InterPro" id="IPR006130">
    <property type="entry name" value="Asp/Orn_carbamoylTrfase"/>
</dbReference>
<dbReference type="InterPro" id="IPR036901">
    <property type="entry name" value="Asp/Orn_carbamoylTrfase_sf"/>
</dbReference>
<dbReference type="InterPro" id="IPR002082">
    <property type="entry name" value="Asp_carbamoyltransf"/>
</dbReference>
<dbReference type="InterPro" id="IPR006131">
    <property type="entry name" value="Asp_carbamoyltransf_Asp/Orn-bd"/>
</dbReference>
<dbReference type="NCBIfam" id="TIGR00670">
    <property type="entry name" value="asp_carb_tr"/>
    <property type="match status" value="1"/>
</dbReference>
<dbReference type="NCBIfam" id="NF002032">
    <property type="entry name" value="PRK00856.1"/>
    <property type="match status" value="1"/>
</dbReference>
<dbReference type="PANTHER" id="PTHR45753:SF6">
    <property type="entry name" value="ASPARTATE CARBAMOYLTRANSFERASE"/>
    <property type="match status" value="1"/>
</dbReference>
<dbReference type="PANTHER" id="PTHR45753">
    <property type="entry name" value="ORNITHINE CARBAMOYLTRANSFERASE, MITOCHONDRIAL"/>
    <property type="match status" value="1"/>
</dbReference>
<dbReference type="Pfam" id="PF00185">
    <property type="entry name" value="OTCace"/>
    <property type="match status" value="1"/>
</dbReference>
<dbReference type="Pfam" id="PF02729">
    <property type="entry name" value="OTCace_N"/>
    <property type="match status" value="1"/>
</dbReference>
<dbReference type="PRINTS" id="PR00100">
    <property type="entry name" value="AOTCASE"/>
</dbReference>
<dbReference type="PRINTS" id="PR00101">
    <property type="entry name" value="ATCASE"/>
</dbReference>
<dbReference type="SUPFAM" id="SSF53671">
    <property type="entry name" value="Aspartate/ornithine carbamoyltransferase"/>
    <property type="match status" value="1"/>
</dbReference>
<dbReference type="PROSITE" id="PS00097">
    <property type="entry name" value="CARBAMOYLTRANSFERASE"/>
    <property type="match status" value="1"/>
</dbReference>
<gene>
    <name evidence="1" type="primary">pyrB</name>
    <name type="ordered locus">sce3822</name>
</gene>